<sequence length="315" mass="34347">MPELLVFPAQTDLHEHPLYRAGHLILQDRASCLPAMLLDPRQAPMSWMPVPPQAIKTSHLAALLKNQGKIFAFDLDARRLASMATLLAWAGVSCCELAEEDFLAVSPLDPRYREVHYVLLDPSCSGSGMPSRQLEEPGAGTPSPVRLHALAGFQQRALCHALTFPSLQRLVYSMCSLCQEENEDMVQDALQQNPGAFRLAPALPARPHRGLSTFPGAEHCLRASPKTTLSGGFFVAVIERVEMPTSASQAKASAPERTPSPAPKRKKRAKSCSRCLHTALHIAEAPGSLLPGGKGRCLSSPWKTLGPHRRQQFAF</sequence>
<evidence type="ECO:0000255" key="1">
    <source>
        <dbReference type="PROSITE-ProRule" id="PRU01023"/>
    </source>
</evidence>
<evidence type="ECO:0000256" key="2">
    <source>
        <dbReference type="SAM" id="MobiDB-lite"/>
    </source>
</evidence>
<evidence type="ECO:0000269" key="3">
    <source>
    </source>
</evidence>
<evidence type="ECO:0000269" key="4">
    <source>
    </source>
</evidence>
<evidence type="ECO:0000269" key="5">
    <source>
    </source>
</evidence>
<evidence type="ECO:0000303" key="6">
    <source>
    </source>
</evidence>
<evidence type="ECO:0000303" key="7">
    <source>
    </source>
</evidence>
<evidence type="ECO:0000303" key="8">
    <source>
    </source>
</evidence>
<evidence type="ECO:0000303" key="9">
    <source>
    </source>
</evidence>
<evidence type="ECO:0000305" key="10"/>
<name>NSN5C_HUMAN</name>
<reference key="1">
    <citation type="journal article" date="2001" name="Cytogenet. Cell Genet.">
        <title>Characterization of two novel genes, WBSCR20 and WBSCR22, deleted in Williams-Beuren syndrome.</title>
        <authorList>
            <person name="Doll A."/>
            <person name="Grzeschik K.-H."/>
        </authorList>
    </citation>
    <scope>NUCLEOTIDE SEQUENCE [MRNA] (ISOFORM 1)</scope>
    <scope>TISSUE SPECIFICITY</scope>
    <scope>VARIANT ARG-303</scope>
</reference>
<reference key="2">
    <citation type="journal article" date="2002" name="Hum. Genet.">
        <title>Identification of additional transcripts in the Williams-Beuren syndrome critical region.</title>
        <authorList>
            <person name="Merla G."/>
            <person name="Ucla C."/>
            <person name="Guipponi M."/>
            <person name="Reymond A."/>
        </authorList>
    </citation>
    <scope>NUCLEOTIDE SEQUENCE [MRNA] (ISOFORM 5)</scope>
    <scope>TISSUE SPECIFICITY</scope>
</reference>
<reference key="3">
    <citation type="journal article" date="2004" name="Nat. Genet.">
        <title>Complete sequencing and characterization of 21,243 full-length human cDNAs.</title>
        <authorList>
            <person name="Ota T."/>
            <person name="Suzuki Y."/>
            <person name="Nishikawa T."/>
            <person name="Otsuki T."/>
            <person name="Sugiyama T."/>
            <person name="Irie R."/>
            <person name="Wakamatsu A."/>
            <person name="Hayashi K."/>
            <person name="Sato H."/>
            <person name="Nagai K."/>
            <person name="Kimura K."/>
            <person name="Makita H."/>
            <person name="Sekine M."/>
            <person name="Obayashi M."/>
            <person name="Nishi T."/>
            <person name="Shibahara T."/>
            <person name="Tanaka T."/>
            <person name="Ishii S."/>
            <person name="Yamamoto J."/>
            <person name="Saito K."/>
            <person name="Kawai Y."/>
            <person name="Isono Y."/>
            <person name="Nakamura Y."/>
            <person name="Nagahari K."/>
            <person name="Murakami K."/>
            <person name="Yasuda T."/>
            <person name="Iwayanagi T."/>
            <person name="Wagatsuma M."/>
            <person name="Shiratori A."/>
            <person name="Sudo H."/>
            <person name="Hosoiri T."/>
            <person name="Kaku Y."/>
            <person name="Kodaira H."/>
            <person name="Kondo H."/>
            <person name="Sugawara M."/>
            <person name="Takahashi M."/>
            <person name="Kanda K."/>
            <person name="Yokoi T."/>
            <person name="Furuya T."/>
            <person name="Kikkawa E."/>
            <person name="Omura Y."/>
            <person name="Abe K."/>
            <person name="Kamihara K."/>
            <person name="Katsuta N."/>
            <person name="Sato K."/>
            <person name="Tanikawa M."/>
            <person name="Yamazaki M."/>
            <person name="Ninomiya K."/>
            <person name="Ishibashi T."/>
            <person name="Yamashita H."/>
            <person name="Murakawa K."/>
            <person name="Fujimori K."/>
            <person name="Tanai H."/>
            <person name="Kimata M."/>
            <person name="Watanabe M."/>
            <person name="Hiraoka S."/>
            <person name="Chiba Y."/>
            <person name="Ishida S."/>
            <person name="Ono Y."/>
            <person name="Takiguchi S."/>
            <person name="Watanabe S."/>
            <person name="Yosida M."/>
            <person name="Hotuta T."/>
            <person name="Kusano J."/>
            <person name="Kanehori K."/>
            <person name="Takahashi-Fujii A."/>
            <person name="Hara H."/>
            <person name="Tanase T.-O."/>
            <person name="Nomura Y."/>
            <person name="Togiya S."/>
            <person name="Komai F."/>
            <person name="Hara R."/>
            <person name="Takeuchi K."/>
            <person name="Arita M."/>
            <person name="Imose N."/>
            <person name="Musashino K."/>
            <person name="Yuuki H."/>
            <person name="Oshima A."/>
            <person name="Sasaki N."/>
            <person name="Aotsuka S."/>
            <person name="Yoshikawa Y."/>
            <person name="Matsunawa H."/>
            <person name="Ichihara T."/>
            <person name="Shiohata N."/>
            <person name="Sano S."/>
            <person name="Moriya S."/>
            <person name="Momiyama H."/>
            <person name="Satoh N."/>
            <person name="Takami S."/>
            <person name="Terashima Y."/>
            <person name="Suzuki O."/>
            <person name="Nakagawa S."/>
            <person name="Senoh A."/>
            <person name="Mizoguchi H."/>
            <person name="Goto Y."/>
            <person name="Shimizu F."/>
            <person name="Wakebe H."/>
            <person name="Hishigaki H."/>
            <person name="Watanabe T."/>
            <person name="Sugiyama A."/>
            <person name="Takemoto M."/>
            <person name="Kawakami B."/>
            <person name="Yamazaki M."/>
            <person name="Watanabe K."/>
            <person name="Kumagai A."/>
            <person name="Itakura S."/>
            <person name="Fukuzumi Y."/>
            <person name="Fujimori Y."/>
            <person name="Komiyama M."/>
            <person name="Tashiro H."/>
            <person name="Tanigami A."/>
            <person name="Fujiwara T."/>
            <person name="Ono T."/>
            <person name="Yamada K."/>
            <person name="Fujii Y."/>
            <person name="Ozaki K."/>
            <person name="Hirao M."/>
            <person name="Ohmori Y."/>
            <person name="Kawabata A."/>
            <person name="Hikiji T."/>
            <person name="Kobatake N."/>
            <person name="Inagaki H."/>
            <person name="Ikema Y."/>
            <person name="Okamoto S."/>
            <person name="Okitani R."/>
            <person name="Kawakami T."/>
            <person name="Noguchi S."/>
            <person name="Itoh T."/>
            <person name="Shigeta K."/>
            <person name="Senba T."/>
            <person name="Matsumura K."/>
            <person name="Nakajima Y."/>
            <person name="Mizuno T."/>
            <person name="Morinaga M."/>
            <person name="Sasaki M."/>
            <person name="Togashi T."/>
            <person name="Oyama M."/>
            <person name="Hata H."/>
            <person name="Watanabe M."/>
            <person name="Komatsu T."/>
            <person name="Mizushima-Sugano J."/>
            <person name="Satoh T."/>
            <person name="Shirai Y."/>
            <person name="Takahashi Y."/>
            <person name="Nakagawa K."/>
            <person name="Okumura K."/>
            <person name="Nagase T."/>
            <person name="Nomura N."/>
            <person name="Kikuchi H."/>
            <person name="Masuho Y."/>
            <person name="Yamashita R."/>
            <person name="Nakai K."/>
            <person name="Yada T."/>
            <person name="Nakamura Y."/>
            <person name="Ohara O."/>
            <person name="Isogai T."/>
            <person name="Sugano S."/>
        </authorList>
    </citation>
    <scope>NUCLEOTIDE SEQUENCE [LARGE SCALE MRNA] (ISOFORMS 1 AND 2)</scope>
    <scope>VARIANT ARG-303</scope>
    <source>
        <tissue>Embryo</tissue>
        <tissue>Synovium</tissue>
    </source>
</reference>
<reference key="4">
    <citation type="journal article" date="2007" name="BMC Genomics">
        <title>The full-ORF clone resource of the German cDNA consortium.</title>
        <authorList>
            <person name="Bechtel S."/>
            <person name="Rosenfelder H."/>
            <person name="Duda A."/>
            <person name="Schmidt C.P."/>
            <person name="Ernst U."/>
            <person name="Wellenreuther R."/>
            <person name="Mehrle A."/>
            <person name="Schuster C."/>
            <person name="Bahr A."/>
            <person name="Bloecker H."/>
            <person name="Heubner D."/>
            <person name="Hoerlein A."/>
            <person name="Michel G."/>
            <person name="Wedler H."/>
            <person name="Koehrer K."/>
            <person name="Ottenwaelder B."/>
            <person name="Poustka A."/>
            <person name="Wiemann S."/>
            <person name="Schupp I."/>
        </authorList>
    </citation>
    <scope>NUCLEOTIDE SEQUENCE [LARGE SCALE MRNA] (ISOFORM 4)</scope>
    <source>
        <tissue>Stomach</tissue>
    </source>
</reference>
<reference key="5">
    <citation type="journal article" date="2004" name="Genome Res.">
        <title>The status, quality, and expansion of the NIH full-length cDNA project: the Mammalian Gene Collection (MGC).</title>
        <authorList>
            <consortium name="The MGC Project Team"/>
        </authorList>
    </citation>
    <scope>NUCLEOTIDE SEQUENCE [LARGE SCALE MRNA] (ISOFORMS 1; 2 AND 3)</scope>
    <source>
        <tissue>Brain</tissue>
        <tissue>Brain cortex</tissue>
        <tissue>Peripheral blood leukocyte</tissue>
        <tissue>Placenta</tissue>
    </source>
</reference>
<proteinExistence type="uncertain"/>
<gene>
    <name type="primary">NSUN5P2</name>
    <name type="synonym">NSUN5C</name>
    <name type="synonym">WBSCR20B</name>
    <name type="synonym">WBSCR20C</name>
</gene>
<comment type="function">
    <text evidence="10">May have S-adenosyl-L-methionine-dependent methyl-transferase activity.</text>
</comment>
<comment type="alternative products">
    <event type="alternative splicing"/>
    <isoform>
        <id>Q63ZY6-1</id>
        <name>1</name>
        <sequence type="displayed"/>
    </isoform>
    <isoform>
        <id>Q63ZY6-2</id>
        <name>2</name>
        <sequence type="described" ref="VSP_021761 VSP_021762"/>
    </isoform>
    <isoform>
        <id>Q63ZY6-4</id>
        <name>3</name>
        <sequence type="described" ref="VSP_021759 VSP_021765"/>
    </isoform>
    <isoform>
        <id>Q63ZY6-5</id>
        <name>4</name>
        <sequence type="described" ref="VSP_021765"/>
    </isoform>
    <isoform>
        <id>Q63ZY6-6</id>
        <name>5</name>
        <sequence type="described" ref="VSP_021763"/>
    </isoform>
</comment>
<comment type="tissue specificity">
    <text evidence="3 4">Ubiquitous.</text>
</comment>
<comment type="disease">
    <text>NSUN5C is located in the Williams-Beuren syndrome (WBS) critical region. WBS results from a hemizygous deletion of several genes on chromosome 7q11.23, thought to arise as a consequence of unequal crossing over between highly homologous low-copy repeat sequences flanking the deleted region.</text>
</comment>
<comment type="similarity">
    <text evidence="1">Belongs to the class I-like SAM-binding methyltransferase superfamily. RsmB/NOP family.</text>
</comment>
<comment type="caution">
    <text evidence="10">Could be the product of a pseudogene.</text>
</comment>
<comment type="sequence caution" evidence="10">
    <conflict type="erroneous initiation">
        <sequence resource="EMBL-CDS" id="AAI06050"/>
    </conflict>
    <text>Extended N-terminus.</text>
</comment>
<keyword id="KW-0025">Alternative splicing</keyword>
<keyword id="KW-0489">Methyltransferase</keyword>
<keyword id="KW-1185">Reference proteome</keyword>
<keyword id="KW-0694">RNA-binding</keyword>
<keyword id="KW-0949">S-adenosyl-L-methionine</keyword>
<keyword id="KW-0808">Transferase</keyword>
<keyword id="KW-0856">Williams-Beuren syndrome</keyword>
<protein>
    <recommendedName>
        <fullName>Putative methyltransferase NSUN5C</fullName>
        <ecNumber>2.1.1.-</ecNumber>
    </recommendedName>
    <alternativeName>
        <fullName>NOL1/NOP2/Sun domain family member 5C</fullName>
    </alternativeName>
    <alternativeName>
        <fullName>Williams-Beuren syndrome chromosomal region 20C protein</fullName>
    </alternativeName>
</protein>
<organism>
    <name type="scientific">Homo sapiens</name>
    <name type="common">Human</name>
    <dbReference type="NCBI Taxonomy" id="9606"/>
    <lineage>
        <taxon>Eukaryota</taxon>
        <taxon>Metazoa</taxon>
        <taxon>Chordata</taxon>
        <taxon>Craniata</taxon>
        <taxon>Vertebrata</taxon>
        <taxon>Euteleostomi</taxon>
        <taxon>Mammalia</taxon>
        <taxon>Eutheria</taxon>
        <taxon>Euarchontoglires</taxon>
        <taxon>Primates</taxon>
        <taxon>Haplorrhini</taxon>
        <taxon>Catarrhini</taxon>
        <taxon>Hominidae</taxon>
        <taxon>Homo</taxon>
    </lineage>
</organism>
<feature type="chain" id="PRO_0000261672" description="Putative methyltransferase NSUN5C">
    <location>
        <begin position="1"/>
        <end position="315"/>
    </location>
</feature>
<feature type="region of interest" description="Disordered" evidence="2">
    <location>
        <begin position="245"/>
        <end position="269"/>
    </location>
</feature>
<feature type="active site" description="Nucleophile" evidence="1">
    <location>
        <position position="175"/>
    </location>
</feature>
<feature type="binding site" evidence="1">
    <location>
        <begin position="50"/>
        <end position="56"/>
    </location>
    <ligand>
        <name>S-adenosyl-L-methionine</name>
        <dbReference type="ChEBI" id="CHEBI:59789"/>
    </ligand>
</feature>
<feature type="binding site" evidence="1">
    <location>
        <position position="74"/>
    </location>
    <ligand>
        <name>S-adenosyl-L-methionine</name>
        <dbReference type="ChEBI" id="CHEBI:59789"/>
    </ligand>
</feature>
<feature type="binding site" evidence="1">
    <location>
        <position position="79"/>
    </location>
    <ligand>
        <name>S-adenosyl-L-methionine</name>
        <dbReference type="ChEBI" id="CHEBI:59789"/>
    </ligand>
</feature>
<feature type="binding site" evidence="1">
    <location>
        <position position="121"/>
    </location>
    <ligand>
        <name>S-adenosyl-L-methionine</name>
        <dbReference type="ChEBI" id="CHEBI:59789"/>
    </ligand>
</feature>
<feature type="splice variant" id="VSP_021759" description="In isoform 3." evidence="8">
    <location>
        <begin position="1"/>
        <end position="128"/>
    </location>
</feature>
<feature type="splice variant" id="VSP_021761" description="In isoform 2." evidence="7 8">
    <original>MPSRQLE</original>
    <variation>EMVRRRG</variation>
    <location>
        <begin position="129"/>
        <end position="135"/>
    </location>
</feature>
<feature type="splice variant" id="VSP_021762" description="In isoform 2." evidence="7 8">
    <location>
        <begin position="136"/>
        <end position="315"/>
    </location>
</feature>
<feature type="splice variant" id="VSP_021763" description="In isoform 5." evidence="6">
    <location>
        <begin position="145"/>
        <end position="168"/>
    </location>
</feature>
<feature type="splice variant" id="VSP_021765" description="In isoform 3 and isoform 4." evidence="8 9">
    <location>
        <begin position="246"/>
        <end position="315"/>
    </location>
</feature>
<feature type="sequence variant" id="VAR_029476" description="In dbSNP:rs400282.">
    <original>W</original>
    <variation>S</variation>
    <location>
        <position position="47"/>
    </location>
</feature>
<feature type="sequence variant" id="VAR_029477" description="In dbSNP:rs395127.">
    <original>A</original>
    <variation>V</variation>
    <location>
        <position position="90"/>
    </location>
</feature>
<feature type="sequence variant" id="VAR_029478" description="In dbSNP:rs17145838.">
    <original>C</original>
    <variation>R</variation>
    <location>
        <position position="272"/>
    </location>
</feature>
<feature type="sequence variant" id="VAR_029479" evidence="3 5">
    <original>K</original>
    <variation>R</variation>
    <location>
        <position position="303"/>
    </location>
</feature>
<feature type="sequence conflict" description="In Ref. 5; AAH82753." evidence="10" ref="5">
    <original>P</original>
    <variation>L</variation>
    <location>
        <position position="2"/>
    </location>
</feature>
<feature type="sequence conflict" description="In Ref. 1; AAL16068 and 3; BAB13875." evidence="10" ref="1 3">
    <original>Q</original>
    <variation>R</variation>
    <location>
        <position position="42"/>
    </location>
</feature>
<feature type="sequence conflict" description="In Ref. 4; CAH56289." evidence="10" ref="4">
    <original>G</original>
    <variation>GG</variation>
    <location>
        <position position="128"/>
    </location>
</feature>
<feature type="sequence conflict" description="In Ref. 1; AAL16068 and 3; BAB13875." evidence="10" ref="1 3">
    <original>G</original>
    <variation>D</variation>
    <location>
        <position position="195"/>
    </location>
</feature>
<feature type="sequence conflict" description="In Ref. 1; AAL16068 and 3; BAB13875." evidence="10" ref="1 3">
    <original>H</original>
    <variation>R</variation>
    <location>
        <position position="281"/>
    </location>
</feature>
<dbReference type="EC" id="2.1.1.-"/>
<dbReference type="EMBL" id="AF420250">
    <property type="protein sequence ID" value="AAL16068.1"/>
    <property type="molecule type" value="mRNA"/>
</dbReference>
<dbReference type="EMBL" id="AF416611">
    <property type="protein sequence ID" value="AAM62319.1"/>
    <property type="molecule type" value="mRNA"/>
</dbReference>
<dbReference type="EMBL" id="AK021688">
    <property type="protein sequence ID" value="BAB13875.1"/>
    <property type="molecule type" value="mRNA"/>
</dbReference>
<dbReference type="EMBL" id="AK292107">
    <property type="protein sequence ID" value="BAF84796.1"/>
    <property type="molecule type" value="mRNA"/>
</dbReference>
<dbReference type="EMBL" id="AL833016">
    <property type="protein sequence ID" value="CAH56289.1"/>
    <property type="status" value="ALT_TERM"/>
    <property type="molecule type" value="mRNA"/>
</dbReference>
<dbReference type="EMBL" id="BC056405">
    <property type="protein sequence ID" value="AAH56405.1"/>
    <property type="molecule type" value="mRNA"/>
</dbReference>
<dbReference type="EMBL" id="BC082753">
    <property type="protein sequence ID" value="AAH82753.2"/>
    <property type="molecule type" value="mRNA"/>
</dbReference>
<dbReference type="EMBL" id="BC093976">
    <property type="protein sequence ID" value="AAH93976.1"/>
    <property type="molecule type" value="mRNA"/>
</dbReference>
<dbReference type="EMBL" id="BC101515">
    <property type="protein sequence ID" value="AAI01516.1"/>
    <property type="molecule type" value="mRNA"/>
</dbReference>
<dbReference type="EMBL" id="BC106049">
    <property type="protein sequence ID" value="AAI06050.1"/>
    <property type="status" value="ALT_INIT"/>
    <property type="molecule type" value="mRNA"/>
</dbReference>
<dbReference type="PIR" id="T17315">
    <property type="entry name" value="T17315"/>
</dbReference>
<dbReference type="SMR" id="Q63ZY6"/>
<dbReference type="FunCoup" id="Q63ZY6">
    <property type="interactions" value="351"/>
</dbReference>
<dbReference type="IntAct" id="Q63ZY6">
    <property type="interactions" value="11"/>
</dbReference>
<dbReference type="MINT" id="Q63ZY6"/>
<dbReference type="GlyGen" id="Q63ZY6">
    <property type="glycosylation" value="1 site"/>
</dbReference>
<dbReference type="iPTMnet" id="Q63ZY6"/>
<dbReference type="PhosphoSitePlus" id="Q63ZY6"/>
<dbReference type="BioMuta" id="HGNC:16609"/>
<dbReference type="DMDM" id="118573084"/>
<dbReference type="jPOST" id="Q63ZY6"/>
<dbReference type="MassIVE" id="Q63ZY6"/>
<dbReference type="PeptideAtlas" id="Q63ZY6"/>
<dbReference type="ProteomicsDB" id="65905">
    <molecule id="Q63ZY6-1"/>
</dbReference>
<dbReference type="ProteomicsDB" id="65906">
    <molecule id="Q63ZY6-2"/>
</dbReference>
<dbReference type="ProteomicsDB" id="65907">
    <molecule id="Q63ZY6-4"/>
</dbReference>
<dbReference type="ProteomicsDB" id="65908">
    <molecule id="Q63ZY6-5"/>
</dbReference>
<dbReference type="ProteomicsDB" id="65909">
    <molecule id="Q63ZY6-6"/>
</dbReference>
<dbReference type="AGR" id="HGNC:16609"/>
<dbReference type="GeneCards" id="NSUN5P2"/>
<dbReference type="HGNC" id="HGNC:16609">
    <property type="gene designation" value="NSUN5P2"/>
</dbReference>
<dbReference type="neXtProt" id="NX_Q63ZY6"/>
<dbReference type="PharmGKB" id="PA143485560"/>
<dbReference type="InParanoid" id="Q63ZY6"/>
<dbReference type="PAN-GO" id="Q63ZY6">
    <property type="GO annotations" value="2 GO annotations based on evolutionary models"/>
</dbReference>
<dbReference type="PhylomeDB" id="Q63ZY6"/>
<dbReference type="PathwayCommons" id="Q63ZY6"/>
<dbReference type="SignaLink" id="Q63ZY6"/>
<dbReference type="ChiTaRS" id="NSUN5P2">
    <property type="organism name" value="human"/>
</dbReference>
<dbReference type="Pharos" id="Q63ZY6">
    <property type="development level" value="Tdark"/>
</dbReference>
<dbReference type="Proteomes" id="UP000005640">
    <property type="component" value="Unplaced"/>
</dbReference>
<dbReference type="RNAct" id="Q63ZY6">
    <property type="molecule type" value="protein"/>
</dbReference>
<dbReference type="GO" id="GO:0003723">
    <property type="term" value="F:RNA binding"/>
    <property type="evidence" value="ECO:0007669"/>
    <property type="project" value="UniProtKB-KW"/>
</dbReference>
<dbReference type="GO" id="GO:0008173">
    <property type="term" value="F:RNA methyltransferase activity"/>
    <property type="evidence" value="ECO:0007669"/>
    <property type="project" value="InterPro"/>
</dbReference>
<dbReference type="GO" id="GO:0008757">
    <property type="term" value="F:S-adenosylmethionine-dependent methyltransferase activity"/>
    <property type="evidence" value="ECO:0007669"/>
    <property type="project" value="UniProtKB-ARBA"/>
</dbReference>
<dbReference type="GO" id="GO:0001510">
    <property type="term" value="P:RNA methylation"/>
    <property type="evidence" value="ECO:0007669"/>
    <property type="project" value="InterPro"/>
</dbReference>
<dbReference type="GO" id="GO:0006396">
    <property type="term" value="P:RNA processing"/>
    <property type="evidence" value="ECO:0007669"/>
    <property type="project" value="UniProtKB-ARBA"/>
</dbReference>
<dbReference type="FunFam" id="3.40.50.150:FF:000139">
    <property type="entry name" value="probable 28S rRNA (Cytosine-C(5))-methyltransferase isoform X2"/>
    <property type="match status" value="1"/>
</dbReference>
<dbReference type="Gene3D" id="3.30.70.1170">
    <property type="entry name" value="Sun protein, domain 3"/>
    <property type="match status" value="1"/>
</dbReference>
<dbReference type="Gene3D" id="3.40.50.150">
    <property type="entry name" value="Vaccinia Virus protein VP39"/>
    <property type="match status" value="1"/>
</dbReference>
<dbReference type="InterPro" id="IPR049560">
    <property type="entry name" value="MeTrfase_RsmB-F_NOP2_cat"/>
</dbReference>
<dbReference type="InterPro" id="IPR001678">
    <property type="entry name" value="MeTrfase_RsmB-F_NOP2_dom"/>
</dbReference>
<dbReference type="InterPro" id="IPR049561">
    <property type="entry name" value="NSUN5_7_fdxn-like"/>
</dbReference>
<dbReference type="InterPro" id="IPR023267">
    <property type="entry name" value="RCMT"/>
</dbReference>
<dbReference type="InterPro" id="IPR029063">
    <property type="entry name" value="SAM-dependent_MTases_sf"/>
</dbReference>
<dbReference type="PANTHER" id="PTHR22807:SF4">
    <property type="entry name" value="28S RRNA (CYTOSINE-C(5))-METHYLTRANSFERASE"/>
    <property type="match status" value="1"/>
</dbReference>
<dbReference type="PANTHER" id="PTHR22807">
    <property type="entry name" value="NOP2 YEAST -RELATED NOL1/NOP2/FMU SUN DOMAIN-CONTAINING"/>
    <property type="match status" value="1"/>
</dbReference>
<dbReference type="Pfam" id="PF01189">
    <property type="entry name" value="Methyltr_RsmB-F"/>
    <property type="match status" value="1"/>
</dbReference>
<dbReference type="Pfam" id="PF21148">
    <property type="entry name" value="NSUN5_fdxn-like"/>
    <property type="match status" value="1"/>
</dbReference>
<dbReference type="PRINTS" id="PR02008">
    <property type="entry name" value="RCMTFAMILY"/>
</dbReference>
<dbReference type="SUPFAM" id="SSF53335">
    <property type="entry name" value="S-adenosyl-L-methionine-dependent methyltransferases"/>
    <property type="match status" value="1"/>
</dbReference>
<dbReference type="PROSITE" id="PS51686">
    <property type="entry name" value="SAM_MT_RSMB_NOP"/>
    <property type="match status" value="1"/>
</dbReference>
<accession>Q63ZY6</accession>
<accession>A8K7U2</accession>
<accession>Q3KQU7</accession>
<accession>Q658S2</accession>
<accession>Q6NZ66</accession>
<accession>Q6PHS1</accession>
<accession>Q8N727</accession>
<accession>Q9HAH4</accession>